<keyword id="KW-1003">Cell membrane</keyword>
<keyword id="KW-0378">Hydrolase</keyword>
<keyword id="KW-0444">Lipid biosynthesis</keyword>
<keyword id="KW-0443">Lipid metabolism</keyword>
<keyword id="KW-0472">Membrane</keyword>
<keyword id="KW-0594">Phospholipid biosynthesis</keyword>
<keyword id="KW-1208">Phospholipid metabolism</keyword>
<keyword id="KW-1185">Reference proteome</keyword>
<keyword id="KW-0812">Transmembrane</keyword>
<keyword id="KW-1133">Transmembrane helix</keyword>
<name>CDH_MYCTO</name>
<accession>P9WPG8</accession>
<accession>L0TC27</accession>
<accession>P63751</accession>
<accession>Q50676</accession>
<gene>
    <name type="primary">cdh</name>
    <name type="ordered locus">MT2346</name>
</gene>
<dbReference type="EC" id="3.6.1.26"/>
<dbReference type="EMBL" id="AE000516">
    <property type="protein sequence ID" value="AAK46631.1"/>
    <property type="molecule type" value="Genomic_DNA"/>
</dbReference>
<dbReference type="PIR" id="E70732">
    <property type="entry name" value="E70732"/>
</dbReference>
<dbReference type="RefSeq" id="WP_003411717.1">
    <property type="nucleotide sequence ID" value="NZ_KK341227.1"/>
</dbReference>
<dbReference type="SMR" id="P9WPG8"/>
<dbReference type="KEGG" id="mtc:MT2346"/>
<dbReference type="PATRIC" id="fig|83331.31.peg.2525"/>
<dbReference type="HOGENOM" id="CLU_077117_1_0_11"/>
<dbReference type="UniPathway" id="UPA00609">
    <property type="reaction ID" value="UER00664"/>
</dbReference>
<dbReference type="Proteomes" id="UP000001020">
    <property type="component" value="Chromosome"/>
</dbReference>
<dbReference type="GO" id="GO:0005886">
    <property type="term" value="C:plasma membrane"/>
    <property type="evidence" value="ECO:0007669"/>
    <property type="project" value="UniProtKB-SubCell"/>
</dbReference>
<dbReference type="GO" id="GO:0008715">
    <property type="term" value="F:CDP-diacylglycerol diphosphatase activity"/>
    <property type="evidence" value="ECO:0007669"/>
    <property type="project" value="UniProtKB-UniRule"/>
</dbReference>
<dbReference type="GO" id="GO:0046342">
    <property type="term" value="P:CDP-diacylglycerol catabolic process"/>
    <property type="evidence" value="ECO:0007669"/>
    <property type="project" value="UniProtKB-UniRule"/>
</dbReference>
<dbReference type="GO" id="GO:0008654">
    <property type="term" value="P:phospholipid biosynthetic process"/>
    <property type="evidence" value="ECO:0007669"/>
    <property type="project" value="UniProtKB-KW"/>
</dbReference>
<dbReference type="Gene3D" id="3.30.428.30">
    <property type="entry name" value="HIT family - CDH-like"/>
    <property type="match status" value="1"/>
</dbReference>
<dbReference type="HAMAP" id="MF_00319">
    <property type="entry name" value="Cdh"/>
    <property type="match status" value="1"/>
</dbReference>
<dbReference type="InterPro" id="IPR003763">
    <property type="entry name" value="CDP-diacylglyc_Pase"/>
</dbReference>
<dbReference type="InterPro" id="IPR036265">
    <property type="entry name" value="HIT-like_sf"/>
</dbReference>
<dbReference type="NCBIfam" id="NF003982">
    <property type="entry name" value="PRK05471.1-1"/>
    <property type="match status" value="1"/>
</dbReference>
<dbReference type="Pfam" id="PF02611">
    <property type="entry name" value="CDH"/>
    <property type="match status" value="1"/>
</dbReference>
<dbReference type="PIRSF" id="PIRSF001273">
    <property type="entry name" value="CDH"/>
    <property type="match status" value="1"/>
</dbReference>
<dbReference type="SUPFAM" id="SSF54197">
    <property type="entry name" value="HIT-like"/>
    <property type="match status" value="1"/>
</dbReference>
<feature type="chain" id="PRO_0000426954" description="Probable CDP-diacylglycerol pyrophosphatase">
    <location>
        <begin position="1"/>
        <end position="260"/>
    </location>
</feature>
<feature type="transmembrane region" description="Helical" evidence="1">
    <location>
        <begin position="10"/>
        <end position="30"/>
    </location>
</feature>
<proteinExistence type="inferred from homology"/>
<organism>
    <name type="scientific">Mycobacterium tuberculosis (strain CDC 1551 / Oshkosh)</name>
    <dbReference type="NCBI Taxonomy" id="83331"/>
    <lineage>
        <taxon>Bacteria</taxon>
        <taxon>Bacillati</taxon>
        <taxon>Actinomycetota</taxon>
        <taxon>Actinomycetes</taxon>
        <taxon>Mycobacteriales</taxon>
        <taxon>Mycobacteriaceae</taxon>
        <taxon>Mycobacterium</taxon>
        <taxon>Mycobacterium tuberculosis complex</taxon>
    </lineage>
</organism>
<evidence type="ECO:0000255" key="1"/>
<evidence type="ECO:0000305" key="2"/>
<reference key="1">
    <citation type="journal article" date="2002" name="J. Bacteriol.">
        <title>Whole-genome comparison of Mycobacterium tuberculosis clinical and laboratory strains.</title>
        <authorList>
            <person name="Fleischmann R.D."/>
            <person name="Alland D."/>
            <person name="Eisen J.A."/>
            <person name="Carpenter L."/>
            <person name="White O."/>
            <person name="Peterson J.D."/>
            <person name="DeBoy R.T."/>
            <person name="Dodson R.J."/>
            <person name="Gwinn M.L."/>
            <person name="Haft D.H."/>
            <person name="Hickey E.K."/>
            <person name="Kolonay J.F."/>
            <person name="Nelson W.C."/>
            <person name="Umayam L.A."/>
            <person name="Ermolaeva M.D."/>
            <person name="Salzberg S.L."/>
            <person name="Delcher A."/>
            <person name="Utterback T.R."/>
            <person name="Weidman J.F."/>
            <person name="Khouri H.M."/>
            <person name="Gill J."/>
            <person name="Mikula A."/>
            <person name="Bishai W."/>
            <person name="Jacobs W.R. Jr."/>
            <person name="Venter J.C."/>
            <person name="Fraser C.M."/>
        </authorList>
    </citation>
    <scope>NUCLEOTIDE SEQUENCE [LARGE SCALE GENOMIC DNA]</scope>
    <source>
        <strain>CDC 1551 / Oshkosh</strain>
    </source>
</reference>
<protein>
    <recommendedName>
        <fullName>Probable CDP-diacylglycerol pyrophosphatase</fullName>
        <ecNumber>3.6.1.26</ecNumber>
    </recommendedName>
    <alternativeName>
        <fullName>CDP-diacylglycerol phosphatidylhydrolase</fullName>
    </alternativeName>
    <alternativeName>
        <fullName>CDP-diglyceride hydrolase</fullName>
    </alternativeName>
</protein>
<sequence>MPKSRRAVSLSVLIGAVIAALAGALIAVTVPARPNRPEADREALWKIVHDRCEFGYRRTGAYAPCTFVDEQSGTALYKADFDPYQFLLIPLARITGIEDPALRESAGRNYLYDAWAARFLVTARLNNSLPESDVVLTINPKNARTQDQLHIHISCSSPTTSAALRNVDTSEYVGWKQLPIDLGGRRFQGLAVDTKAFESRNLFRDIYLKVTADGKKMENASIAVANVAQDQFLLLLAEGTEDQPVAAETLQDHDCSITKS</sequence>
<comment type="catalytic activity">
    <reaction>
        <text>a CDP-1,2-diacyl-sn-glycerol + H2O = a 1,2-diacyl-sn-glycero-3-phosphate + CMP + 2 H(+)</text>
        <dbReference type="Rhea" id="RHEA:15221"/>
        <dbReference type="ChEBI" id="CHEBI:15377"/>
        <dbReference type="ChEBI" id="CHEBI:15378"/>
        <dbReference type="ChEBI" id="CHEBI:58332"/>
        <dbReference type="ChEBI" id="CHEBI:58608"/>
        <dbReference type="ChEBI" id="CHEBI:60377"/>
        <dbReference type="EC" id="3.6.1.26"/>
    </reaction>
</comment>
<comment type="pathway">
    <text>Phospholipid metabolism; CDP-diacylglycerol degradation; phosphatidate from CDP-diacylglycerol: step 1/1.</text>
</comment>
<comment type="subcellular location">
    <subcellularLocation>
        <location evidence="2">Cell membrane</location>
        <topology evidence="2">Single-pass membrane protein</topology>
    </subcellularLocation>
</comment>
<comment type="similarity">
    <text evidence="2">Belongs to the Cdh family.</text>
</comment>